<reference key="1">
    <citation type="journal article" date="1993" name="FEBS Lett.">
        <title>A new family of basic cysteine-rich plant antifungal proteins from Brassicaceae species.</title>
        <authorList>
            <person name="Terras F.R.G."/>
            <person name="Torrekens S."/>
            <person name="van Leuven F."/>
            <person name="Osborn R.W."/>
            <person name="Vanderleyden J."/>
            <person name="Cammue B.P.A."/>
            <person name="Broekaert W.F."/>
        </authorList>
    </citation>
    <scope>PROTEIN SEQUENCE</scope>
    <source>
        <tissue>Seed</tissue>
    </source>
</reference>
<protein>
    <recommendedName>
        <fullName>Defensin-like protein 2</fullName>
    </recommendedName>
    <alternativeName>
        <fullName>Cysteine-rich antifungal protein 2</fullName>
        <shortName>AFP2</shortName>
    </alternativeName>
</protein>
<organism>
    <name type="scientific">Brassica napus</name>
    <name type="common">Rape</name>
    <dbReference type="NCBI Taxonomy" id="3708"/>
    <lineage>
        <taxon>Eukaryota</taxon>
        <taxon>Viridiplantae</taxon>
        <taxon>Streptophyta</taxon>
        <taxon>Embryophyta</taxon>
        <taxon>Tracheophyta</taxon>
        <taxon>Spermatophyta</taxon>
        <taxon>Magnoliopsida</taxon>
        <taxon>eudicotyledons</taxon>
        <taxon>Gunneridae</taxon>
        <taxon>Pentapetalae</taxon>
        <taxon>rosids</taxon>
        <taxon>malvids</taxon>
        <taxon>Brassicales</taxon>
        <taxon>Brassicaceae</taxon>
        <taxon>Brassiceae</taxon>
        <taxon>Brassica</taxon>
    </lineage>
</organism>
<sequence>QKLCERPSGTWSGVCGNNNACKN</sequence>
<dbReference type="PIR" id="S28991">
    <property type="entry name" value="S28991"/>
</dbReference>
<dbReference type="GO" id="GO:0050832">
    <property type="term" value="P:defense response to fungus"/>
    <property type="evidence" value="ECO:0007669"/>
    <property type="project" value="UniProtKB-KW"/>
</dbReference>
<dbReference type="GO" id="GO:0031640">
    <property type="term" value="P:killing of cells of another organism"/>
    <property type="evidence" value="ECO:0007669"/>
    <property type="project" value="UniProtKB-KW"/>
</dbReference>
<dbReference type="Gene3D" id="3.30.30.10">
    <property type="entry name" value="Knottin, scorpion toxin-like"/>
    <property type="match status" value="1"/>
</dbReference>
<dbReference type="InterPro" id="IPR036574">
    <property type="entry name" value="Scorpion_toxin-like_sf"/>
</dbReference>
<dbReference type="Pfam" id="PF00304">
    <property type="entry name" value="Gamma-thionin"/>
    <property type="match status" value="1"/>
</dbReference>
<dbReference type="SUPFAM" id="SSF57095">
    <property type="entry name" value="Scorpion toxin-like"/>
    <property type="match status" value="1"/>
</dbReference>
<accession>P30226</accession>
<feature type="chain" id="PRO_0000074236" description="Defensin-like protein 2">
    <location>
        <begin position="1"/>
        <end position="23" status="greater than"/>
    </location>
</feature>
<feature type="modified residue" description="Pyrrolidone carboxylic acid" evidence="1">
    <location>
        <position position="1"/>
    </location>
</feature>
<feature type="non-terminal residue">
    <location>
        <position position="23"/>
    </location>
</feature>
<name>DEF2_BRANA</name>
<evidence type="ECO:0000250" key="1">
    <source>
        <dbReference type="UniProtKB" id="P30230"/>
    </source>
</evidence>
<evidence type="ECO:0000305" key="2"/>
<comment type="function">
    <text>Possesses antifungal activity sensitive to inorganic cations.</text>
</comment>
<comment type="subunit">
    <text>Forms oligomers in its native state.</text>
</comment>
<comment type="similarity">
    <text evidence="2">Belongs to the DEFL family.</text>
</comment>
<keyword id="KW-0929">Antimicrobial</keyword>
<keyword id="KW-0903">Direct protein sequencing</keyword>
<keyword id="KW-0295">Fungicide</keyword>
<keyword id="KW-0611">Plant defense</keyword>
<keyword id="KW-0873">Pyrrolidone carboxylic acid</keyword>
<proteinExistence type="evidence at protein level"/>